<feature type="chain" id="PRO_0000297428" description="Erythronate-4-phosphate dehydrogenase">
    <location>
        <begin position="1"/>
        <end position="355"/>
    </location>
</feature>
<feature type="active site" evidence="1">
    <location>
        <position position="206"/>
    </location>
</feature>
<feature type="active site" evidence="1">
    <location>
        <position position="234"/>
    </location>
</feature>
<feature type="active site" description="Proton donor" evidence="1">
    <location>
        <position position="251"/>
    </location>
</feature>
<feature type="binding site" evidence="1">
    <location>
        <position position="45"/>
    </location>
    <ligand>
        <name>substrate</name>
    </ligand>
</feature>
<feature type="binding site" evidence="1">
    <location>
        <position position="66"/>
    </location>
    <ligand>
        <name>substrate</name>
    </ligand>
</feature>
<feature type="binding site" evidence="1">
    <location>
        <position position="146"/>
    </location>
    <ligand>
        <name>NAD(+)</name>
        <dbReference type="ChEBI" id="CHEBI:57540"/>
    </ligand>
</feature>
<feature type="binding site" evidence="1">
    <location>
        <position position="229"/>
    </location>
    <ligand>
        <name>NAD(+)</name>
        <dbReference type="ChEBI" id="CHEBI:57540"/>
    </ligand>
</feature>
<feature type="binding site" evidence="1">
    <location>
        <position position="254"/>
    </location>
    <ligand>
        <name>NAD(+)</name>
        <dbReference type="ChEBI" id="CHEBI:57540"/>
    </ligand>
</feature>
<feature type="binding site" evidence="1">
    <location>
        <position position="255"/>
    </location>
    <ligand>
        <name>substrate</name>
    </ligand>
</feature>
<protein>
    <recommendedName>
        <fullName evidence="1">Erythronate-4-phosphate dehydrogenase</fullName>
        <ecNumber evidence="1">1.1.1.290</ecNumber>
    </recommendedName>
</protein>
<reference key="1">
    <citation type="journal article" date="2007" name="Genes Dev.">
        <title>New insights into Acinetobacter baumannii pathogenesis revealed by high-density pyrosequencing and transposon mutagenesis.</title>
        <authorList>
            <person name="Smith M.G."/>
            <person name="Gianoulis T.A."/>
            <person name="Pukatzki S."/>
            <person name="Mekalanos J.J."/>
            <person name="Ornston L.N."/>
            <person name="Gerstein M."/>
            <person name="Snyder M."/>
        </authorList>
    </citation>
    <scope>NUCLEOTIDE SEQUENCE [LARGE SCALE GENOMIC DNA]</scope>
    <source>
        <strain>ATCC 17978 / DSM 105126 / CIP 53.77 / LMG 1025 / NCDC KC755 / 5377</strain>
    </source>
</reference>
<evidence type="ECO:0000255" key="1">
    <source>
        <dbReference type="HAMAP-Rule" id="MF_01825"/>
    </source>
</evidence>
<comment type="function">
    <text evidence="1">Catalyzes the oxidation of erythronate-4-phosphate to 3-hydroxy-2-oxo-4-phosphonooxybutanoate.</text>
</comment>
<comment type="catalytic activity">
    <reaction evidence="1">
        <text>4-phospho-D-erythronate + NAD(+) = (R)-3-hydroxy-2-oxo-4-phosphooxybutanoate + NADH + H(+)</text>
        <dbReference type="Rhea" id="RHEA:18829"/>
        <dbReference type="ChEBI" id="CHEBI:15378"/>
        <dbReference type="ChEBI" id="CHEBI:57540"/>
        <dbReference type="ChEBI" id="CHEBI:57945"/>
        <dbReference type="ChEBI" id="CHEBI:58538"/>
        <dbReference type="ChEBI" id="CHEBI:58766"/>
        <dbReference type="EC" id="1.1.1.290"/>
    </reaction>
</comment>
<comment type="pathway">
    <text evidence="1">Cofactor biosynthesis; pyridoxine 5'-phosphate biosynthesis; pyridoxine 5'-phosphate from D-erythrose 4-phosphate: step 2/5.</text>
</comment>
<comment type="subunit">
    <text evidence="1">Homodimer.</text>
</comment>
<comment type="subcellular location">
    <subcellularLocation>
        <location evidence="1">Cytoplasm</location>
    </subcellularLocation>
</comment>
<comment type="similarity">
    <text evidence="1">Belongs to the D-isomer specific 2-hydroxyacid dehydrogenase family. PdxB subfamily.</text>
</comment>
<proteinExistence type="inferred from homology"/>
<organism>
    <name type="scientific">Acinetobacter baumannii (strain ATCC 17978 / DSM 105126 / CIP 53.77 / LMG 1025 / NCDC KC755 / 5377)</name>
    <dbReference type="NCBI Taxonomy" id="400667"/>
    <lineage>
        <taxon>Bacteria</taxon>
        <taxon>Pseudomonadati</taxon>
        <taxon>Pseudomonadota</taxon>
        <taxon>Gammaproteobacteria</taxon>
        <taxon>Moraxellales</taxon>
        <taxon>Moraxellaceae</taxon>
        <taxon>Acinetobacter</taxon>
        <taxon>Acinetobacter calcoaceticus/baumannii complex</taxon>
    </lineage>
</organism>
<keyword id="KW-0963">Cytoplasm</keyword>
<keyword id="KW-0520">NAD</keyword>
<keyword id="KW-0560">Oxidoreductase</keyword>
<keyword id="KW-0664">Pyridoxine biosynthesis</keyword>
<sequence length="355" mass="39488">MKIVADENLAFTDYFFSEFGDIQHKAGRTLTHTDVQDAEALLVRSVTAVNESLIQNTALKYVGSATIGTDHLDIQALEKQGITWANAAGCNAQAVAEYVITALLHLDASLLEQQEKFTLGIVGLGNVGKRLAYMAQLLGWKVIGFDPFVQLDSIENVSFQTLLQQANAVSIHVPLTKKGEHATYHLFDEKAFAALQPNTILINSARGPVVKEAALIEDIQRTQRKVVLDVFEHEPVISEELLNMLALATPHIAGYSLEGKARGTQMIYEAFCQKFGYDINKRFETQLPACEDYFSRHDLKAVLKQKISQIYDIAQDDANIRACVKEGKVEQKAFDLLRKNYPLRREWAAHGGPQA</sequence>
<name>PDXB_ACIBT</name>
<gene>
    <name evidence="1" type="primary">pdxB</name>
    <name type="ordered locus">A1S_2637</name>
</gene>
<accession>A3M810</accession>
<dbReference type="EC" id="1.1.1.290" evidence="1"/>
<dbReference type="EMBL" id="CP000521">
    <property type="protein sequence ID" value="ABO13054.2"/>
    <property type="molecule type" value="Genomic_DNA"/>
</dbReference>
<dbReference type="RefSeq" id="WP_000706087.1">
    <property type="nucleotide sequence ID" value="NZ_CP053098.1"/>
</dbReference>
<dbReference type="SMR" id="A3M810"/>
<dbReference type="KEGG" id="acb:A1S_2637"/>
<dbReference type="HOGENOM" id="CLU_019796_4_0_6"/>
<dbReference type="UniPathway" id="UPA00244">
    <property type="reaction ID" value="UER00310"/>
</dbReference>
<dbReference type="GO" id="GO:0005737">
    <property type="term" value="C:cytoplasm"/>
    <property type="evidence" value="ECO:0007669"/>
    <property type="project" value="UniProtKB-SubCell"/>
</dbReference>
<dbReference type="GO" id="GO:0033711">
    <property type="term" value="F:4-phosphoerythronate dehydrogenase activity"/>
    <property type="evidence" value="ECO:0007669"/>
    <property type="project" value="UniProtKB-EC"/>
</dbReference>
<dbReference type="GO" id="GO:0051287">
    <property type="term" value="F:NAD binding"/>
    <property type="evidence" value="ECO:0007669"/>
    <property type="project" value="InterPro"/>
</dbReference>
<dbReference type="GO" id="GO:0046983">
    <property type="term" value="F:protein dimerization activity"/>
    <property type="evidence" value="ECO:0007669"/>
    <property type="project" value="InterPro"/>
</dbReference>
<dbReference type="GO" id="GO:0008615">
    <property type="term" value="P:pyridoxine biosynthetic process"/>
    <property type="evidence" value="ECO:0007669"/>
    <property type="project" value="UniProtKB-UniRule"/>
</dbReference>
<dbReference type="CDD" id="cd12158">
    <property type="entry name" value="ErythrP_dh"/>
    <property type="match status" value="1"/>
</dbReference>
<dbReference type="Gene3D" id="3.30.1370.170">
    <property type="match status" value="1"/>
</dbReference>
<dbReference type="Gene3D" id="3.40.50.720">
    <property type="entry name" value="NAD(P)-binding Rossmann-like Domain"/>
    <property type="match status" value="2"/>
</dbReference>
<dbReference type="HAMAP" id="MF_01825">
    <property type="entry name" value="PdxB"/>
    <property type="match status" value="1"/>
</dbReference>
<dbReference type="InterPro" id="IPR050418">
    <property type="entry name" value="D-iso_2-hydroxyacid_DH_PdxB"/>
</dbReference>
<dbReference type="InterPro" id="IPR006139">
    <property type="entry name" value="D-isomer_2_OHA_DH_cat_dom"/>
</dbReference>
<dbReference type="InterPro" id="IPR029752">
    <property type="entry name" value="D-isomer_DH_CS1"/>
</dbReference>
<dbReference type="InterPro" id="IPR006140">
    <property type="entry name" value="D-isomer_DH_NAD-bd"/>
</dbReference>
<dbReference type="InterPro" id="IPR020921">
    <property type="entry name" value="Erythronate-4-P_DHase"/>
</dbReference>
<dbReference type="InterPro" id="IPR024531">
    <property type="entry name" value="Erythronate-4-P_DHase_dimer"/>
</dbReference>
<dbReference type="InterPro" id="IPR036291">
    <property type="entry name" value="NAD(P)-bd_dom_sf"/>
</dbReference>
<dbReference type="InterPro" id="IPR038251">
    <property type="entry name" value="PdxB_dimer_sf"/>
</dbReference>
<dbReference type="PANTHER" id="PTHR43761:SF1">
    <property type="entry name" value="D-ISOMER SPECIFIC 2-HYDROXYACID DEHYDROGENASE CATALYTIC DOMAIN-CONTAINING PROTEIN-RELATED"/>
    <property type="match status" value="1"/>
</dbReference>
<dbReference type="PANTHER" id="PTHR43761">
    <property type="entry name" value="D-ISOMER SPECIFIC 2-HYDROXYACID DEHYDROGENASE FAMILY PROTEIN (AFU_ORTHOLOGUE AFUA_1G13630)"/>
    <property type="match status" value="1"/>
</dbReference>
<dbReference type="Pfam" id="PF00389">
    <property type="entry name" value="2-Hacid_dh"/>
    <property type="match status" value="1"/>
</dbReference>
<dbReference type="Pfam" id="PF02826">
    <property type="entry name" value="2-Hacid_dh_C"/>
    <property type="match status" value="1"/>
</dbReference>
<dbReference type="Pfam" id="PF11890">
    <property type="entry name" value="DUF3410"/>
    <property type="match status" value="1"/>
</dbReference>
<dbReference type="SUPFAM" id="SSF52283">
    <property type="entry name" value="Formate/glycerate dehydrogenase catalytic domain-like"/>
    <property type="match status" value="1"/>
</dbReference>
<dbReference type="SUPFAM" id="SSF51735">
    <property type="entry name" value="NAD(P)-binding Rossmann-fold domains"/>
    <property type="match status" value="1"/>
</dbReference>
<dbReference type="PROSITE" id="PS00065">
    <property type="entry name" value="D_2_HYDROXYACID_DH_1"/>
    <property type="match status" value="1"/>
</dbReference>